<accession>Q28071</accession>
<evidence type="ECO:0000250" key="1"/>
<evidence type="ECO:0000250" key="2">
    <source>
        <dbReference type="UniProtKB" id="P10747"/>
    </source>
</evidence>
<evidence type="ECO:0000255" key="3"/>
<protein>
    <recommendedName>
        <fullName>T-cell-specific surface glycoprotein CD28</fullName>
    </recommendedName>
    <cdAntigenName>CD28</cdAntigenName>
</protein>
<gene>
    <name type="primary">CD28</name>
</gene>
<organism>
    <name type="scientific">Bos taurus</name>
    <name type="common">Bovine</name>
    <dbReference type="NCBI Taxonomy" id="9913"/>
    <lineage>
        <taxon>Eukaryota</taxon>
        <taxon>Metazoa</taxon>
        <taxon>Chordata</taxon>
        <taxon>Craniata</taxon>
        <taxon>Vertebrata</taxon>
        <taxon>Euteleostomi</taxon>
        <taxon>Mammalia</taxon>
        <taxon>Eutheria</taxon>
        <taxon>Laurasiatheria</taxon>
        <taxon>Artiodactyla</taxon>
        <taxon>Ruminantia</taxon>
        <taxon>Pecora</taxon>
        <taxon>Bovidae</taxon>
        <taxon>Bovinae</taxon>
        <taxon>Bos</taxon>
    </lineage>
</organism>
<feature type="signal peptide" evidence="3">
    <location>
        <begin position="1"/>
        <end position="18"/>
    </location>
</feature>
<feature type="chain" id="PRO_0000014651" description="T-cell-specific surface glycoprotein CD28">
    <location>
        <begin position="19"/>
        <end position="219"/>
    </location>
</feature>
<feature type="topological domain" description="Extracellular" evidence="3">
    <location>
        <begin position="19"/>
        <end position="151"/>
    </location>
</feature>
<feature type="transmembrane region" description="Helical" evidence="3">
    <location>
        <begin position="152"/>
        <end position="178"/>
    </location>
</feature>
<feature type="topological domain" description="Cytoplasmic" evidence="3">
    <location>
        <begin position="179"/>
        <end position="219"/>
    </location>
</feature>
<feature type="domain" description="Ig-like V-type">
    <location>
        <begin position="28"/>
        <end position="136"/>
    </location>
</feature>
<feature type="modified residue" description="Phosphoserine" evidence="2">
    <location>
        <position position="188"/>
    </location>
</feature>
<feature type="modified residue" description="Phosphotyrosine" evidence="2">
    <location>
        <position position="190"/>
    </location>
</feature>
<feature type="modified residue" description="Phosphotyrosine" evidence="2">
    <location>
        <position position="208"/>
    </location>
</feature>
<feature type="glycosylation site" description="N-linked (GlcNAc...) asparagine" evidence="3">
    <location>
        <position position="37"/>
    </location>
</feature>
<feature type="glycosylation site" description="N-linked (GlcNAc...) asparagine" evidence="3">
    <location>
        <position position="71"/>
    </location>
</feature>
<feature type="glycosylation site" description="N-linked (GlcNAc...) asparagine" evidence="3">
    <location>
        <position position="84"/>
    </location>
</feature>
<feature type="glycosylation site" description="N-linked (GlcNAc...) asparagine" evidence="3">
    <location>
        <position position="91"/>
    </location>
</feature>
<feature type="glycosylation site" description="N-linked (GlcNAc...) asparagine" evidence="3">
    <location>
        <position position="104"/>
    </location>
</feature>
<feature type="glycosylation site" description="N-linked (GlcNAc...) asparagine" evidence="3">
    <location>
        <position position="128"/>
    </location>
</feature>
<feature type="disulfide bond" evidence="1">
    <location>
        <begin position="40"/>
        <end position="111"/>
    </location>
</feature>
<feature type="disulfide bond" evidence="1">
    <location>
        <begin position="66"/>
        <end position="85"/>
    </location>
</feature>
<proteinExistence type="evidence at transcript level"/>
<name>CD28_BOVIN</name>
<comment type="function">
    <text evidence="2">Receptor that plays a role in T-cell activation, proliferation, survival and the maintenance of immune homeostasis. Functions not only as an amplifier of TCR signals but delivers unique signals that control intracellular biochemical events that alter the gene expression program of T-cells. Stimulation upon engagement of its cognate ligands CD80 or CD86 increases proliferation and expression of various cytokines in particular IL2 production in both CD4(+) and CD8(+) T-cell subsets. Mechanistically, ligation induces recruitment of protein kinase C-theta/PRKCQ and GRB2 leading to NF-kappa-B activation via both PI3K/Akt-dependent and -independent pathways. In conjunction with TCR/CD3 ligation and CD40L costimulation, enhances the production of IL4 and IL10 in T-cells.</text>
</comment>
<comment type="subunit">
    <text evidence="2">Homodimer; disulfide-linked. Interacts with DUSP14. Binds to CD80/B7-1 and CD86/B7-2/B70. Interacts with GRB2. Interacts with PIK3R1. Interacts with PRKCQ.</text>
</comment>
<comment type="subcellular location">
    <subcellularLocation>
        <location evidence="2">Cell membrane</location>
        <topology evidence="2">Single-pass type I membrane protein</topology>
    </subcellularLocation>
</comment>
<comment type="PTM">
    <text evidence="2">Phosphorylated by LCK. Dephosphorylated by PTPN11.</text>
</comment>
<dbReference type="EMBL" id="X93304">
    <property type="protein sequence ID" value="CAA63707.1"/>
    <property type="molecule type" value="mRNA"/>
</dbReference>
<dbReference type="RefSeq" id="NP_851347.1">
    <property type="nucleotide sequence ID" value="NM_181004.1"/>
</dbReference>
<dbReference type="SMR" id="Q28071"/>
<dbReference type="FunCoup" id="Q28071">
    <property type="interactions" value="153"/>
</dbReference>
<dbReference type="STRING" id="9913.ENSBTAP00000069428"/>
<dbReference type="GlyCosmos" id="Q28071">
    <property type="glycosylation" value="6 sites, No reported glycans"/>
</dbReference>
<dbReference type="GlyGen" id="Q28071">
    <property type="glycosylation" value="6 sites"/>
</dbReference>
<dbReference type="PaxDb" id="9913-ENSBTAP00000009792"/>
<dbReference type="GeneID" id="281050"/>
<dbReference type="KEGG" id="bta:281050"/>
<dbReference type="CTD" id="940"/>
<dbReference type="eggNOG" id="ENOG502SAVP">
    <property type="taxonomic scope" value="Eukaryota"/>
</dbReference>
<dbReference type="InParanoid" id="Q28071"/>
<dbReference type="OrthoDB" id="8654606at2759"/>
<dbReference type="Proteomes" id="UP000009136">
    <property type="component" value="Unplaced"/>
</dbReference>
<dbReference type="GO" id="GO:0009897">
    <property type="term" value="C:external side of plasma membrane"/>
    <property type="evidence" value="ECO:0000318"/>
    <property type="project" value="GO_Central"/>
</dbReference>
<dbReference type="GO" id="GO:0006955">
    <property type="term" value="P:immune response"/>
    <property type="evidence" value="ECO:0007669"/>
    <property type="project" value="InterPro"/>
</dbReference>
<dbReference type="GO" id="GO:0032733">
    <property type="term" value="P:positive regulation of interleukin-10 production"/>
    <property type="evidence" value="ECO:0000250"/>
    <property type="project" value="UniProtKB"/>
</dbReference>
<dbReference type="GO" id="GO:0032743">
    <property type="term" value="P:positive regulation of interleukin-2 production"/>
    <property type="evidence" value="ECO:0000250"/>
    <property type="project" value="UniProtKB"/>
</dbReference>
<dbReference type="GO" id="GO:0032753">
    <property type="term" value="P:positive regulation of interleukin-4 production"/>
    <property type="evidence" value="ECO:0000250"/>
    <property type="project" value="UniProtKB"/>
</dbReference>
<dbReference type="GO" id="GO:0045840">
    <property type="term" value="P:positive regulation of mitotic nuclear division"/>
    <property type="evidence" value="ECO:0000250"/>
    <property type="project" value="UniProtKB"/>
</dbReference>
<dbReference type="GO" id="GO:0042102">
    <property type="term" value="P:positive regulation of T cell proliferation"/>
    <property type="evidence" value="ECO:0000250"/>
    <property type="project" value="UniProtKB"/>
</dbReference>
<dbReference type="GO" id="GO:0042110">
    <property type="term" value="P:T cell activation"/>
    <property type="evidence" value="ECO:0000318"/>
    <property type="project" value="GO_Central"/>
</dbReference>
<dbReference type="GO" id="GO:0031295">
    <property type="term" value="P:T cell costimulation"/>
    <property type="evidence" value="ECO:0000318"/>
    <property type="project" value="GO_Central"/>
</dbReference>
<dbReference type="GO" id="GO:0050852">
    <property type="term" value="P:T cell receptor signaling pathway"/>
    <property type="evidence" value="ECO:0000318"/>
    <property type="project" value="GO_Central"/>
</dbReference>
<dbReference type="FunFam" id="2.60.40.10:FF:000716">
    <property type="entry name" value="T-cell-specific surface glycoprotein CD28"/>
    <property type="match status" value="1"/>
</dbReference>
<dbReference type="Gene3D" id="2.60.40.10">
    <property type="entry name" value="Immunoglobulins"/>
    <property type="match status" value="1"/>
</dbReference>
<dbReference type="InterPro" id="IPR008093">
    <property type="entry name" value="CD28"/>
</dbReference>
<dbReference type="InterPro" id="IPR040216">
    <property type="entry name" value="CTLA4/CD28"/>
</dbReference>
<dbReference type="InterPro" id="IPR036179">
    <property type="entry name" value="Ig-like_dom_sf"/>
</dbReference>
<dbReference type="InterPro" id="IPR013783">
    <property type="entry name" value="Ig-like_fold"/>
</dbReference>
<dbReference type="InterPro" id="IPR013106">
    <property type="entry name" value="Ig_V-set"/>
</dbReference>
<dbReference type="PANTHER" id="PTHR11494">
    <property type="entry name" value="CYTOTOXIC T-LYMPHOCYTE PROTEIN"/>
    <property type="match status" value="1"/>
</dbReference>
<dbReference type="PANTHER" id="PTHR11494:SF7">
    <property type="entry name" value="T-CELL-SPECIFIC SURFACE GLYCOPROTEIN CD28"/>
    <property type="match status" value="1"/>
</dbReference>
<dbReference type="Pfam" id="PF15910">
    <property type="entry name" value="V-set_2"/>
    <property type="match status" value="1"/>
</dbReference>
<dbReference type="PRINTS" id="PR01717">
    <property type="entry name" value="CD28ANTIGEN"/>
</dbReference>
<dbReference type="SMART" id="SM00406">
    <property type="entry name" value="IGv"/>
    <property type="match status" value="1"/>
</dbReference>
<dbReference type="SUPFAM" id="SSF48726">
    <property type="entry name" value="Immunoglobulin"/>
    <property type="match status" value="1"/>
</dbReference>
<sequence>MLRLLLALNFFPSIQVAENKILVKQSPMLVVNDNEVNLSCKYTYNLFSKEFRASLYKGADSAVEVCAVNGNHSHPLQSTNKEFNCTVKVGNETVTFYLQDLYVNQTDIYFCKLEVLYPPPYIDNEKSNGTIIHVKEKHLCPSPRSPESSKPFWALVVVNGVLVFYSLLVTVALSNCWMKNKRNRMLQSDYMNMTPRRPGPTRRHYQPYAPARDFAAYRS</sequence>
<keyword id="KW-1003">Cell membrane</keyword>
<keyword id="KW-1015">Disulfide bond</keyword>
<keyword id="KW-0325">Glycoprotein</keyword>
<keyword id="KW-0393">Immunoglobulin domain</keyword>
<keyword id="KW-0472">Membrane</keyword>
<keyword id="KW-0597">Phosphoprotein</keyword>
<keyword id="KW-0675">Receptor</keyword>
<keyword id="KW-1185">Reference proteome</keyword>
<keyword id="KW-0732">Signal</keyword>
<keyword id="KW-0812">Transmembrane</keyword>
<keyword id="KW-1133">Transmembrane helix</keyword>
<reference key="1">
    <citation type="journal article" date="1996" name="Immunogenetics">
        <title>Cattle CTLA-4, CD28 and chicken CD28 bind CD86: MYPPPY is not conserved in cattle CD28.</title>
        <authorList>
            <person name="Parsons K.R."/>
            <person name="Young J.R."/>
            <person name="Collins R.A."/>
            <person name="Howard C.J."/>
        </authorList>
    </citation>
    <scope>NUCLEOTIDE SEQUENCE [MRNA]</scope>
</reference>